<organism>
    <name type="scientific">Symbiobacterium thermophilum (strain DSM 24528 / JCM 14929 / IAM 14863 / T)</name>
    <dbReference type="NCBI Taxonomy" id="292459"/>
    <lineage>
        <taxon>Bacteria</taxon>
        <taxon>Bacillati</taxon>
        <taxon>Bacillota</taxon>
        <taxon>Clostridia</taxon>
        <taxon>Eubacteriales</taxon>
        <taxon>Symbiobacteriaceae</taxon>
        <taxon>Symbiobacterium</taxon>
    </lineage>
</organism>
<dbReference type="EMBL" id="AP006840">
    <property type="protein sequence ID" value="BAD41633.1"/>
    <property type="molecule type" value="Genomic_DNA"/>
</dbReference>
<dbReference type="RefSeq" id="WP_011196770.1">
    <property type="nucleotide sequence ID" value="NC_006177.1"/>
</dbReference>
<dbReference type="STRING" id="292459.STH2648"/>
<dbReference type="KEGG" id="sth:STH2648"/>
<dbReference type="eggNOG" id="COG2707">
    <property type="taxonomic scope" value="Bacteria"/>
</dbReference>
<dbReference type="HOGENOM" id="CLU_125889_1_0_9"/>
<dbReference type="OrthoDB" id="80306at2"/>
<dbReference type="Proteomes" id="UP000000417">
    <property type="component" value="Chromosome"/>
</dbReference>
<dbReference type="GO" id="GO:0005886">
    <property type="term" value="C:plasma membrane"/>
    <property type="evidence" value="ECO:0007669"/>
    <property type="project" value="UniProtKB-SubCell"/>
</dbReference>
<dbReference type="HAMAP" id="MF_01874">
    <property type="entry name" value="UPF0756"/>
    <property type="match status" value="1"/>
</dbReference>
<dbReference type="InterPro" id="IPR007382">
    <property type="entry name" value="UPF0756_TM"/>
</dbReference>
<dbReference type="PANTHER" id="PTHR38452">
    <property type="entry name" value="UPF0756 MEMBRANE PROTEIN YEAL"/>
    <property type="match status" value="1"/>
</dbReference>
<dbReference type="PANTHER" id="PTHR38452:SF1">
    <property type="entry name" value="UPF0756 MEMBRANE PROTEIN YEAL"/>
    <property type="match status" value="1"/>
</dbReference>
<dbReference type="Pfam" id="PF04284">
    <property type="entry name" value="DUF441"/>
    <property type="match status" value="1"/>
</dbReference>
<proteinExistence type="inferred from homology"/>
<gene>
    <name type="ordered locus">STH2648</name>
</gene>
<feature type="chain" id="PRO_0000388940" description="UPF0756 membrane protein STH2648">
    <location>
        <begin position="1"/>
        <end position="150"/>
    </location>
</feature>
<feature type="transmembrane region" description="Helical" evidence="1">
    <location>
        <begin position="13"/>
        <end position="33"/>
    </location>
</feature>
<feature type="transmembrane region" description="Helical" evidence="1">
    <location>
        <begin position="52"/>
        <end position="72"/>
    </location>
</feature>
<feature type="transmembrane region" description="Helical" evidence="1">
    <location>
        <begin position="85"/>
        <end position="105"/>
    </location>
</feature>
<feature type="transmembrane region" description="Helical" evidence="1">
    <location>
        <begin position="111"/>
        <end position="131"/>
    </location>
</feature>
<sequence>MPGDQVILLSLMALGVVARNALIVTAAGVVLILRVLALERFFPLLERRGLEAGLIFLLIAVLVPFATGEVGWAEIRQSFTSWTGLAAILGGIIAAVLSGYGVTLLQVKPEVIVGMVVGTILGVVLFKGIPVGPLAAAGFTAILLALVRGH</sequence>
<keyword id="KW-1003">Cell membrane</keyword>
<keyword id="KW-0472">Membrane</keyword>
<keyword id="KW-1185">Reference proteome</keyword>
<keyword id="KW-0812">Transmembrane</keyword>
<keyword id="KW-1133">Transmembrane helix</keyword>
<reference key="1">
    <citation type="journal article" date="2004" name="Nucleic Acids Res.">
        <title>Genome sequence of Symbiobacterium thermophilum, an uncultivable bacterium that depends on microbial commensalism.</title>
        <authorList>
            <person name="Ueda K."/>
            <person name="Yamashita A."/>
            <person name="Ishikawa J."/>
            <person name="Shimada M."/>
            <person name="Watsuji T."/>
            <person name="Morimura K."/>
            <person name="Ikeda H."/>
            <person name="Hattori M."/>
            <person name="Beppu T."/>
        </authorList>
    </citation>
    <scope>NUCLEOTIDE SEQUENCE [LARGE SCALE GENOMIC DNA]</scope>
    <source>
        <strain>DSM 24528 / JCM 14929 / IAM 14863 / T</strain>
    </source>
</reference>
<protein>
    <recommendedName>
        <fullName evidence="1">UPF0756 membrane protein STH2648</fullName>
    </recommendedName>
</protein>
<evidence type="ECO:0000255" key="1">
    <source>
        <dbReference type="HAMAP-Rule" id="MF_01874"/>
    </source>
</evidence>
<comment type="subcellular location">
    <subcellularLocation>
        <location evidence="1">Cell membrane</location>
        <topology evidence="1">Multi-pass membrane protein</topology>
    </subcellularLocation>
</comment>
<comment type="similarity">
    <text evidence="1">Belongs to the UPF0756 family.</text>
</comment>
<name>Y2648_SYMTH</name>
<accession>Q67L13</accession>